<keyword id="KW-0687">Ribonucleoprotein</keyword>
<keyword id="KW-0689">Ribosomal protein</keyword>
<keyword id="KW-0694">RNA-binding</keyword>
<keyword id="KW-0699">rRNA-binding</keyword>
<organism>
    <name type="scientific">Streptococcus pyogenes serotype M49 (strain NZ131)</name>
    <dbReference type="NCBI Taxonomy" id="471876"/>
    <lineage>
        <taxon>Bacteria</taxon>
        <taxon>Bacillati</taxon>
        <taxon>Bacillota</taxon>
        <taxon>Bacilli</taxon>
        <taxon>Lactobacillales</taxon>
        <taxon>Streptococcaceae</taxon>
        <taxon>Streptococcus</taxon>
    </lineage>
</organism>
<comment type="function">
    <text evidence="1">One of the primary rRNA binding proteins, it binds specifically to the 5'-end of 16S ribosomal RNA.</text>
</comment>
<comment type="subunit">
    <text evidence="1">Part of the 30S ribosomal subunit.</text>
</comment>
<comment type="similarity">
    <text evidence="1">Belongs to the universal ribosomal protein uS17 family.</text>
</comment>
<dbReference type="EMBL" id="CP000829">
    <property type="protein sequence ID" value="ACI60413.1"/>
    <property type="molecule type" value="Genomic_DNA"/>
</dbReference>
<dbReference type="SMR" id="B5XJ45"/>
<dbReference type="KEGG" id="soz:Spy49_0056"/>
<dbReference type="HOGENOM" id="CLU_073626_1_0_9"/>
<dbReference type="Proteomes" id="UP000001039">
    <property type="component" value="Chromosome"/>
</dbReference>
<dbReference type="GO" id="GO:0022627">
    <property type="term" value="C:cytosolic small ribosomal subunit"/>
    <property type="evidence" value="ECO:0007669"/>
    <property type="project" value="TreeGrafter"/>
</dbReference>
<dbReference type="GO" id="GO:0019843">
    <property type="term" value="F:rRNA binding"/>
    <property type="evidence" value="ECO:0007669"/>
    <property type="project" value="UniProtKB-UniRule"/>
</dbReference>
<dbReference type="GO" id="GO:0003735">
    <property type="term" value="F:structural constituent of ribosome"/>
    <property type="evidence" value="ECO:0007669"/>
    <property type="project" value="InterPro"/>
</dbReference>
<dbReference type="GO" id="GO:0006412">
    <property type="term" value="P:translation"/>
    <property type="evidence" value="ECO:0007669"/>
    <property type="project" value="UniProtKB-UniRule"/>
</dbReference>
<dbReference type="CDD" id="cd00364">
    <property type="entry name" value="Ribosomal_uS17"/>
    <property type="match status" value="1"/>
</dbReference>
<dbReference type="FunFam" id="2.40.50.140:FF:000026">
    <property type="entry name" value="30S ribosomal protein S17"/>
    <property type="match status" value="1"/>
</dbReference>
<dbReference type="Gene3D" id="2.40.50.140">
    <property type="entry name" value="Nucleic acid-binding proteins"/>
    <property type="match status" value="1"/>
</dbReference>
<dbReference type="HAMAP" id="MF_01345_B">
    <property type="entry name" value="Ribosomal_uS17_B"/>
    <property type="match status" value="1"/>
</dbReference>
<dbReference type="InterPro" id="IPR012340">
    <property type="entry name" value="NA-bd_OB-fold"/>
</dbReference>
<dbReference type="InterPro" id="IPR000266">
    <property type="entry name" value="Ribosomal_uS17"/>
</dbReference>
<dbReference type="InterPro" id="IPR019984">
    <property type="entry name" value="Ribosomal_uS17_bact/chlr"/>
</dbReference>
<dbReference type="InterPro" id="IPR019979">
    <property type="entry name" value="Ribosomal_uS17_CS"/>
</dbReference>
<dbReference type="NCBIfam" id="NF004123">
    <property type="entry name" value="PRK05610.1"/>
    <property type="match status" value="1"/>
</dbReference>
<dbReference type="NCBIfam" id="TIGR03635">
    <property type="entry name" value="uS17_bact"/>
    <property type="match status" value="1"/>
</dbReference>
<dbReference type="PANTHER" id="PTHR10744">
    <property type="entry name" value="40S RIBOSOMAL PROTEIN S11 FAMILY MEMBER"/>
    <property type="match status" value="1"/>
</dbReference>
<dbReference type="PANTHER" id="PTHR10744:SF1">
    <property type="entry name" value="SMALL RIBOSOMAL SUBUNIT PROTEIN US17M"/>
    <property type="match status" value="1"/>
</dbReference>
<dbReference type="Pfam" id="PF00366">
    <property type="entry name" value="Ribosomal_S17"/>
    <property type="match status" value="1"/>
</dbReference>
<dbReference type="PRINTS" id="PR00973">
    <property type="entry name" value="RIBOSOMALS17"/>
</dbReference>
<dbReference type="SUPFAM" id="SSF50249">
    <property type="entry name" value="Nucleic acid-binding proteins"/>
    <property type="match status" value="1"/>
</dbReference>
<dbReference type="PROSITE" id="PS00056">
    <property type="entry name" value="RIBOSOMAL_S17"/>
    <property type="match status" value="1"/>
</dbReference>
<gene>
    <name evidence="1" type="primary">rpsQ</name>
    <name type="ordered locus">Spy49_0056</name>
</gene>
<protein>
    <recommendedName>
        <fullName evidence="1">Small ribosomal subunit protein uS17</fullName>
    </recommendedName>
    <alternativeName>
        <fullName evidence="2">30S ribosomal protein S17</fullName>
    </alternativeName>
</protein>
<sequence>MERNQRKTLYGRVVSDKMDKTITVVVETKRNHPVYGKRINYSKKYKAHDENNVAKEGDIVRIMETRPLSATKRFRLVEVVEKAVII</sequence>
<name>RS17_STRPZ</name>
<proteinExistence type="inferred from homology"/>
<accession>B5XJ45</accession>
<reference key="1">
    <citation type="journal article" date="2008" name="J. Bacteriol.">
        <title>Genome sequence of a nephritogenic and highly transformable M49 strain of Streptococcus pyogenes.</title>
        <authorList>
            <person name="McShan W.M."/>
            <person name="Ferretti J.J."/>
            <person name="Karasawa T."/>
            <person name="Suvorov A.N."/>
            <person name="Lin S."/>
            <person name="Qin B."/>
            <person name="Jia H."/>
            <person name="Kenton S."/>
            <person name="Najar F."/>
            <person name="Wu H."/>
            <person name="Scott J."/>
            <person name="Roe B.A."/>
            <person name="Savic D.J."/>
        </authorList>
    </citation>
    <scope>NUCLEOTIDE SEQUENCE [LARGE SCALE GENOMIC DNA]</scope>
    <source>
        <strain>NZ131</strain>
    </source>
</reference>
<feature type="chain" id="PRO_1000143312" description="Small ribosomal subunit protein uS17">
    <location>
        <begin position="1"/>
        <end position="86"/>
    </location>
</feature>
<evidence type="ECO:0000255" key="1">
    <source>
        <dbReference type="HAMAP-Rule" id="MF_01345"/>
    </source>
</evidence>
<evidence type="ECO:0000305" key="2"/>